<dbReference type="EC" id="2.8.1.8" evidence="1"/>
<dbReference type="EMBL" id="CU468135">
    <property type="protein sequence ID" value="CAO97405.1"/>
    <property type="molecule type" value="Genomic_DNA"/>
</dbReference>
<dbReference type="RefSeq" id="WP_012442074.1">
    <property type="nucleotide sequence ID" value="NC_010694.1"/>
</dbReference>
<dbReference type="SMR" id="B2VBK1"/>
<dbReference type="STRING" id="465817.ETA_23590"/>
<dbReference type="KEGG" id="eta:ETA_23590"/>
<dbReference type="eggNOG" id="COG0320">
    <property type="taxonomic scope" value="Bacteria"/>
</dbReference>
<dbReference type="HOGENOM" id="CLU_033144_2_1_6"/>
<dbReference type="OrthoDB" id="9787898at2"/>
<dbReference type="UniPathway" id="UPA00538">
    <property type="reaction ID" value="UER00593"/>
</dbReference>
<dbReference type="Proteomes" id="UP000001726">
    <property type="component" value="Chromosome"/>
</dbReference>
<dbReference type="GO" id="GO:0005737">
    <property type="term" value="C:cytoplasm"/>
    <property type="evidence" value="ECO:0007669"/>
    <property type="project" value="UniProtKB-SubCell"/>
</dbReference>
<dbReference type="GO" id="GO:0051539">
    <property type="term" value="F:4 iron, 4 sulfur cluster binding"/>
    <property type="evidence" value="ECO:0007669"/>
    <property type="project" value="UniProtKB-UniRule"/>
</dbReference>
<dbReference type="GO" id="GO:0016992">
    <property type="term" value="F:lipoate synthase activity"/>
    <property type="evidence" value="ECO:0007669"/>
    <property type="project" value="UniProtKB-UniRule"/>
</dbReference>
<dbReference type="GO" id="GO:0046872">
    <property type="term" value="F:metal ion binding"/>
    <property type="evidence" value="ECO:0007669"/>
    <property type="project" value="UniProtKB-KW"/>
</dbReference>
<dbReference type="CDD" id="cd01335">
    <property type="entry name" value="Radical_SAM"/>
    <property type="match status" value="1"/>
</dbReference>
<dbReference type="FunFam" id="3.20.20.70:FF:000023">
    <property type="entry name" value="Lipoyl synthase"/>
    <property type="match status" value="1"/>
</dbReference>
<dbReference type="Gene3D" id="3.20.20.70">
    <property type="entry name" value="Aldolase class I"/>
    <property type="match status" value="1"/>
</dbReference>
<dbReference type="HAMAP" id="MF_00206">
    <property type="entry name" value="Lipoyl_synth"/>
    <property type="match status" value="1"/>
</dbReference>
<dbReference type="InterPro" id="IPR013785">
    <property type="entry name" value="Aldolase_TIM"/>
</dbReference>
<dbReference type="InterPro" id="IPR006638">
    <property type="entry name" value="Elp3/MiaA/NifB-like_rSAM"/>
</dbReference>
<dbReference type="InterPro" id="IPR031691">
    <property type="entry name" value="LIAS_N"/>
</dbReference>
<dbReference type="InterPro" id="IPR003698">
    <property type="entry name" value="Lipoyl_synth"/>
</dbReference>
<dbReference type="InterPro" id="IPR007197">
    <property type="entry name" value="rSAM"/>
</dbReference>
<dbReference type="NCBIfam" id="TIGR00510">
    <property type="entry name" value="lipA"/>
    <property type="match status" value="1"/>
</dbReference>
<dbReference type="NCBIfam" id="NF004019">
    <property type="entry name" value="PRK05481.1"/>
    <property type="match status" value="1"/>
</dbReference>
<dbReference type="NCBIfam" id="NF009544">
    <property type="entry name" value="PRK12928.1"/>
    <property type="match status" value="1"/>
</dbReference>
<dbReference type="PANTHER" id="PTHR10949">
    <property type="entry name" value="LIPOYL SYNTHASE"/>
    <property type="match status" value="1"/>
</dbReference>
<dbReference type="PANTHER" id="PTHR10949:SF0">
    <property type="entry name" value="LIPOYL SYNTHASE, MITOCHONDRIAL"/>
    <property type="match status" value="1"/>
</dbReference>
<dbReference type="Pfam" id="PF16881">
    <property type="entry name" value="LIAS_N"/>
    <property type="match status" value="1"/>
</dbReference>
<dbReference type="Pfam" id="PF04055">
    <property type="entry name" value="Radical_SAM"/>
    <property type="match status" value="1"/>
</dbReference>
<dbReference type="PIRSF" id="PIRSF005963">
    <property type="entry name" value="Lipoyl_synth"/>
    <property type="match status" value="1"/>
</dbReference>
<dbReference type="SFLD" id="SFLDF00271">
    <property type="entry name" value="lipoyl_synthase"/>
    <property type="match status" value="1"/>
</dbReference>
<dbReference type="SFLD" id="SFLDS00029">
    <property type="entry name" value="Radical_SAM"/>
    <property type="match status" value="1"/>
</dbReference>
<dbReference type="SMART" id="SM00729">
    <property type="entry name" value="Elp3"/>
    <property type="match status" value="1"/>
</dbReference>
<dbReference type="SUPFAM" id="SSF102114">
    <property type="entry name" value="Radical SAM enzymes"/>
    <property type="match status" value="1"/>
</dbReference>
<dbReference type="PROSITE" id="PS51918">
    <property type="entry name" value="RADICAL_SAM"/>
    <property type="match status" value="1"/>
</dbReference>
<name>LIPA_ERWT9</name>
<organism>
    <name type="scientific">Erwinia tasmaniensis (strain DSM 17950 / CFBP 7177 / CIP 109463 / NCPPB 4357 / Et1/99)</name>
    <dbReference type="NCBI Taxonomy" id="465817"/>
    <lineage>
        <taxon>Bacteria</taxon>
        <taxon>Pseudomonadati</taxon>
        <taxon>Pseudomonadota</taxon>
        <taxon>Gammaproteobacteria</taxon>
        <taxon>Enterobacterales</taxon>
        <taxon>Erwiniaceae</taxon>
        <taxon>Erwinia</taxon>
    </lineage>
</organism>
<accession>B2VBK1</accession>
<keyword id="KW-0004">4Fe-4S</keyword>
<keyword id="KW-0963">Cytoplasm</keyword>
<keyword id="KW-0408">Iron</keyword>
<keyword id="KW-0411">Iron-sulfur</keyword>
<keyword id="KW-0479">Metal-binding</keyword>
<keyword id="KW-1185">Reference proteome</keyword>
<keyword id="KW-0949">S-adenosyl-L-methionine</keyword>
<keyword id="KW-0808">Transferase</keyword>
<evidence type="ECO:0000255" key="1">
    <source>
        <dbReference type="HAMAP-Rule" id="MF_00206"/>
    </source>
</evidence>
<evidence type="ECO:0000255" key="2">
    <source>
        <dbReference type="PROSITE-ProRule" id="PRU01266"/>
    </source>
</evidence>
<comment type="function">
    <text evidence="1">Catalyzes the radical-mediated insertion of two sulfur atoms into the C-6 and C-8 positions of the octanoyl moiety bound to the lipoyl domains of lipoate-dependent enzymes, thereby converting the octanoylated domains into lipoylated derivatives.</text>
</comment>
<comment type="catalytic activity">
    <reaction evidence="1">
        <text>[[Fe-S] cluster scaffold protein carrying a second [4Fe-4S](2+) cluster] + N(6)-octanoyl-L-lysyl-[protein] + 2 oxidized [2Fe-2S]-[ferredoxin] + 2 S-adenosyl-L-methionine + 4 H(+) = [[Fe-S] cluster scaffold protein] + N(6)-[(R)-dihydrolipoyl]-L-lysyl-[protein] + 4 Fe(3+) + 2 hydrogen sulfide + 2 5'-deoxyadenosine + 2 L-methionine + 2 reduced [2Fe-2S]-[ferredoxin]</text>
        <dbReference type="Rhea" id="RHEA:16585"/>
        <dbReference type="Rhea" id="RHEA-COMP:9928"/>
        <dbReference type="Rhea" id="RHEA-COMP:10000"/>
        <dbReference type="Rhea" id="RHEA-COMP:10001"/>
        <dbReference type="Rhea" id="RHEA-COMP:10475"/>
        <dbReference type="Rhea" id="RHEA-COMP:14568"/>
        <dbReference type="Rhea" id="RHEA-COMP:14569"/>
        <dbReference type="ChEBI" id="CHEBI:15378"/>
        <dbReference type="ChEBI" id="CHEBI:17319"/>
        <dbReference type="ChEBI" id="CHEBI:29034"/>
        <dbReference type="ChEBI" id="CHEBI:29919"/>
        <dbReference type="ChEBI" id="CHEBI:33722"/>
        <dbReference type="ChEBI" id="CHEBI:33737"/>
        <dbReference type="ChEBI" id="CHEBI:33738"/>
        <dbReference type="ChEBI" id="CHEBI:57844"/>
        <dbReference type="ChEBI" id="CHEBI:59789"/>
        <dbReference type="ChEBI" id="CHEBI:78809"/>
        <dbReference type="ChEBI" id="CHEBI:83100"/>
        <dbReference type="EC" id="2.8.1.8"/>
    </reaction>
</comment>
<comment type="cofactor">
    <cofactor evidence="1">
        <name>[4Fe-4S] cluster</name>
        <dbReference type="ChEBI" id="CHEBI:49883"/>
    </cofactor>
    <text evidence="1">Binds 2 [4Fe-4S] clusters per subunit. One cluster is coordinated with 3 cysteines and an exchangeable S-adenosyl-L-methionine.</text>
</comment>
<comment type="pathway">
    <text evidence="1">Protein modification; protein lipoylation via endogenous pathway; protein N(6)-(lipoyl)lysine from octanoyl-[acyl-carrier-protein]: step 2/2.</text>
</comment>
<comment type="subcellular location">
    <subcellularLocation>
        <location evidence="1">Cytoplasm</location>
    </subcellularLocation>
</comment>
<comment type="similarity">
    <text evidence="1">Belongs to the radical SAM superfamily. Lipoyl synthase family.</text>
</comment>
<feature type="chain" id="PRO_1000099603" description="Lipoyl synthase">
    <location>
        <begin position="1"/>
        <end position="321"/>
    </location>
</feature>
<feature type="domain" description="Radical SAM core" evidence="2">
    <location>
        <begin position="80"/>
        <end position="297"/>
    </location>
</feature>
<feature type="binding site" evidence="1">
    <location>
        <position position="68"/>
    </location>
    <ligand>
        <name>[4Fe-4S] cluster</name>
        <dbReference type="ChEBI" id="CHEBI:49883"/>
        <label>1</label>
    </ligand>
</feature>
<feature type="binding site" evidence="1">
    <location>
        <position position="73"/>
    </location>
    <ligand>
        <name>[4Fe-4S] cluster</name>
        <dbReference type="ChEBI" id="CHEBI:49883"/>
        <label>1</label>
    </ligand>
</feature>
<feature type="binding site" evidence="1">
    <location>
        <position position="79"/>
    </location>
    <ligand>
        <name>[4Fe-4S] cluster</name>
        <dbReference type="ChEBI" id="CHEBI:49883"/>
        <label>1</label>
    </ligand>
</feature>
<feature type="binding site" evidence="1">
    <location>
        <position position="94"/>
    </location>
    <ligand>
        <name>[4Fe-4S] cluster</name>
        <dbReference type="ChEBI" id="CHEBI:49883"/>
        <label>2</label>
        <note>4Fe-4S-S-AdoMet</note>
    </ligand>
</feature>
<feature type="binding site" evidence="1">
    <location>
        <position position="98"/>
    </location>
    <ligand>
        <name>[4Fe-4S] cluster</name>
        <dbReference type="ChEBI" id="CHEBI:49883"/>
        <label>2</label>
        <note>4Fe-4S-S-AdoMet</note>
    </ligand>
</feature>
<feature type="binding site" evidence="1">
    <location>
        <position position="101"/>
    </location>
    <ligand>
        <name>[4Fe-4S] cluster</name>
        <dbReference type="ChEBI" id="CHEBI:49883"/>
        <label>2</label>
        <note>4Fe-4S-S-AdoMet</note>
    </ligand>
</feature>
<feature type="binding site" evidence="1">
    <location>
        <position position="308"/>
    </location>
    <ligand>
        <name>[4Fe-4S] cluster</name>
        <dbReference type="ChEBI" id="CHEBI:49883"/>
        <label>1</label>
    </ligand>
</feature>
<gene>
    <name evidence="1" type="primary">lipA</name>
    <name type="ordered locus">ETA_23590</name>
</gene>
<protein>
    <recommendedName>
        <fullName evidence="1">Lipoyl synthase</fullName>
        <ecNumber evidence="1">2.8.1.8</ecNumber>
    </recommendedName>
    <alternativeName>
        <fullName evidence="1">Lip-syn</fullName>
        <shortName evidence="1">LS</shortName>
    </alternativeName>
    <alternativeName>
        <fullName evidence="1">Lipoate synthase</fullName>
    </alternativeName>
    <alternativeName>
        <fullName evidence="1">Lipoic acid synthase</fullName>
    </alternativeName>
    <alternativeName>
        <fullName evidence="1">Sulfur insertion protein LipA</fullName>
    </alternativeName>
</protein>
<sequence length="321" mass="35939">MSKPIVMERGVKYRDADKMALIPVKTVVTERTEVLRKPEWMKIKLPADSSRIQGIKAAMRKNGLHSVCEEASCPNLAECFNHGTATFMILGAICTRRCPFCDVAHGRPTTPDANEPGKLAQTIADMALRYVVITSVDRDDLRDGGAQHFADCISAIREKSPTIKIETLVPDFRGRMDRALEILNATPPDVFNHNLENVPRVYRQVRPGANYDWSLKLLERFKEAHPEIPTKSGLMVGLGETNAEIVEVMRDLRRHGVTMLTLGQYLQPSRHHLPVQRYVSPAEFDEMKAAAMDMGFTHAACGPFVRSSYHADMQAKGLEVK</sequence>
<reference key="1">
    <citation type="journal article" date="2008" name="Environ. Microbiol.">
        <title>The genome of Erwinia tasmaniensis strain Et1/99, a non-pathogenic bacterium in the genus Erwinia.</title>
        <authorList>
            <person name="Kube M."/>
            <person name="Migdoll A.M."/>
            <person name="Mueller I."/>
            <person name="Kuhl H."/>
            <person name="Beck A."/>
            <person name="Reinhardt R."/>
            <person name="Geider K."/>
        </authorList>
    </citation>
    <scope>NUCLEOTIDE SEQUENCE [LARGE SCALE GENOMIC DNA]</scope>
    <source>
        <strain>DSM 17950 / CFBP 7177 / CIP 109463 / NCPPB 4357 / Et1/99</strain>
    </source>
</reference>
<proteinExistence type="inferred from homology"/>